<accession>P48928</accession>
<comment type="function">
    <text evidence="1">Core subunit of the mitochondrial membrane respiratory chain NADH dehydrogenase (Complex I) that is believed to belong to the minimal assembly required for catalysis. Complex I functions in the transfer of electrons from NADH to the respiratory chain. The immediate electron acceptor for the enzyme is believed to be ubiquinone (By similarity).</text>
</comment>
<comment type="catalytic activity">
    <reaction>
        <text>a ubiquinone + NADH + 5 H(+)(in) = a ubiquinol + NAD(+) + 4 H(+)(out)</text>
        <dbReference type="Rhea" id="RHEA:29091"/>
        <dbReference type="Rhea" id="RHEA-COMP:9565"/>
        <dbReference type="Rhea" id="RHEA-COMP:9566"/>
        <dbReference type="ChEBI" id="CHEBI:15378"/>
        <dbReference type="ChEBI" id="CHEBI:16389"/>
        <dbReference type="ChEBI" id="CHEBI:17976"/>
        <dbReference type="ChEBI" id="CHEBI:57540"/>
        <dbReference type="ChEBI" id="CHEBI:57945"/>
        <dbReference type="EC" id="7.1.1.2"/>
    </reaction>
</comment>
<comment type="subcellular location">
    <subcellularLocation>
        <location evidence="1">Mitochondrion membrane</location>
        <topology evidence="1">Multi-pass membrane protein</topology>
    </subcellularLocation>
</comment>
<comment type="similarity">
    <text evidence="3">Belongs to the complex I subunit 4L family.</text>
</comment>
<keyword id="KW-0249">Electron transport</keyword>
<keyword id="KW-0472">Membrane</keyword>
<keyword id="KW-0496">Mitochondrion</keyword>
<keyword id="KW-0520">NAD</keyword>
<keyword id="KW-0679">Respiratory chain</keyword>
<keyword id="KW-1278">Translocase</keyword>
<keyword id="KW-0812">Transmembrane</keyword>
<keyword id="KW-1133">Transmembrane helix</keyword>
<keyword id="KW-0813">Transport</keyword>
<keyword id="KW-0830">Ubiquinone</keyword>
<sequence length="99" mass="10909">MTIYSYLLLLCMVMFVTFFTQKNNILSLMVVLESLMLITLSSVAVSLNYMAGSSMVMILLLCFAAAEAALSLSLLVCFIQVNSSCEMLAMNKILFAKKS</sequence>
<protein>
    <recommendedName>
        <fullName>NADH-ubiquinone oxidoreductase chain 4L</fullName>
        <ecNumber>7.1.1.2</ecNumber>
    </recommendedName>
    <alternativeName>
        <fullName>NADH dehydrogenase subunit 4L</fullName>
    </alternativeName>
</protein>
<geneLocation type="mitochondrion"/>
<proteinExistence type="inferred from homology"/>
<name>NU4LM_ALBCA</name>
<organism>
    <name type="scientific">Albinaria caerulea</name>
    <name type="common">Land snail</name>
    <dbReference type="NCBI Taxonomy" id="42349"/>
    <lineage>
        <taxon>Eukaryota</taxon>
        <taxon>Metazoa</taxon>
        <taxon>Spiralia</taxon>
        <taxon>Lophotrochozoa</taxon>
        <taxon>Mollusca</taxon>
        <taxon>Gastropoda</taxon>
        <taxon>Heterobranchia</taxon>
        <taxon>Euthyneura</taxon>
        <taxon>Panpulmonata</taxon>
        <taxon>Eupulmonata</taxon>
        <taxon>Stylommatophora</taxon>
        <taxon>Helicina</taxon>
        <taxon>Clausilioidea</taxon>
        <taxon>Clausiliidae</taxon>
        <taxon>Alopiinae</taxon>
        <taxon>Albinaria</taxon>
    </lineage>
</organism>
<dbReference type="EC" id="7.1.1.2"/>
<dbReference type="EMBL" id="X83390">
    <property type="protein sequence ID" value="CAA58298.1"/>
    <property type="molecule type" value="Genomic_DNA"/>
</dbReference>
<dbReference type="PIR" id="S59145">
    <property type="entry name" value="S59145"/>
</dbReference>
<dbReference type="RefSeq" id="NP_007331.1">
    <property type="nucleotide sequence ID" value="NC_001761.1"/>
</dbReference>
<dbReference type="SMR" id="P48928"/>
<dbReference type="GeneID" id="808007"/>
<dbReference type="CTD" id="4539"/>
<dbReference type="GO" id="GO:0031966">
    <property type="term" value="C:mitochondrial membrane"/>
    <property type="evidence" value="ECO:0007669"/>
    <property type="project" value="UniProtKB-SubCell"/>
</dbReference>
<dbReference type="GO" id="GO:0008137">
    <property type="term" value="F:NADH dehydrogenase (ubiquinone) activity"/>
    <property type="evidence" value="ECO:0007669"/>
    <property type="project" value="UniProtKB-EC"/>
</dbReference>
<dbReference type="Gene3D" id="1.10.287.3510">
    <property type="match status" value="1"/>
</dbReference>
<feature type="chain" id="PRO_0000118381" description="NADH-ubiquinone oxidoreductase chain 4L">
    <location>
        <begin position="1"/>
        <end position="99"/>
    </location>
</feature>
<feature type="transmembrane region" description="Helical" evidence="2">
    <location>
        <begin position="1"/>
        <end position="21"/>
    </location>
</feature>
<feature type="transmembrane region" description="Helical" evidence="2">
    <location>
        <begin position="25"/>
        <end position="45"/>
    </location>
</feature>
<feature type="transmembrane region" description="Helical" evidence="2">
    <location>
        <begin position="56"/>
        <end position="76"/>
    </location>
</feature>
<reference key="1">
    <citation type="journal article" date="1995" name="Genetics">
        <title>Complete sequence and gene organization of the mitochondrial genome of the land snail Albinaria coerulea.</title>
        <authorList>
            <person name="Hatzoglou E."/>
            <person name="Rodakis G.C."/>
            <person name="Lecanidou R."/>
        </authorList>
    </citation>
    <scope>NUCLEOTIDE SEQUENCE [GENOMIC DNA]</scope>
</reference>
<gene>
    <name type="primary">ND4L</name>
</gene>
<evidence type="ECO:0000250" key="1"/>
<evidence type="ECO:0000255" key="2"/>
<evidence type="ECO:0000305" key="3"/>